<reference key="1">
    <citation type="journal article" date="2005" name="Science">
        <title>The transcriptional landscape of the mammalian genome.</title>
        <authorList>
            <person name="Carninci P."/>
            <person name="Kasukawa T."/>
            <person name="Katayama S."/>
            <person name="Gough J."/>
            <person name="Frith M.C."/>
            <person name="Maeda N."/>
            <person name="Oyama R."/>
            <person name="Ravasi T."/>
            <person name="Lenhard B."/>
            <person name="Wells C."/>
            <person name="Kodzius R."/>
            <person name="Shimokawa K."/>
            <person name="Bajic V.B."/>
            <person name="Brenner S.E."/>
            <person name="Batalov S."/>
            <person name="Forrest A.R."/>
            <person name="Zavolan M."/>
            <person name="Davis M.J."/>
            <person name="Wilming L.G."/>
            <person name="Aidinis V."/>
            <person name="Allen J.E."/>
            <person name="Ambesi-Impiombato A."/>
            <person name="Apweiler R."/>
            <person name="Aturaliya R.N."/>
            <person name="Bailey T.L."/>
            <person name="Bansal M."/>
            <person name="Baxter L."/>
            <person name="Beisel K.W."/>
            <person name="Bersano T."/>
            <person name="Bono H."/>
            <person name="Chalk A.M."/>
            <person name="Chiu K.P."/>
            <person name="Choudhary V."/>
            <person name="Christoffels A."/>
            <person name="Clutterbuck D.R."/>
            <person name="Crowe M.L."/>
            <person name="Dalla E."/>
            <person name="Dalrymple B.P."/>
            <person name="de Bono B."/>
            <person name="Della Gatta G."/>
            <person name="di Bernardo D."/>
            <person name="Down T."/>
            <person name="Engstrom P."/>
            <person name="Fagiolini M."/>
            <person name="Faulkner G."/>
            <person name="Fletcher C.F."/>
            <person name="Fukushima T."/>
            <person name="Furuno M."/>
            <person name="Futaki S."/>
            <person name="Gariboldi M."/>
            <person name="Georgii-Hemming P."/>
            <person name="Gingeras T.R."/>
            <person name="Gojobori T."/>
            <person name="Green R.E."/>
            <person name="Gustincich S."/>
            <person name="Harbers M."/>
            <person name="Hayashi Y."/>
            <person name="Hensch T.K."/>
            <person name="Hirokawa N."/>
            <person name="Hill D."/>
            <person name="Huminiecki L."/>
            <person name="Iacono M."/>
            <person name="Ikeo K."/>
            <person name="Iwama A."/>
            <person name="Ishikawa T."/>
            <person name="Jakt M."/>
            <person name="Kanapin A."/>
            <person name="Katoh M."/>
            <person name="Kawasawa Y."/>
            <person name="Kelso J."/>
            <person name="Kitamura H."/>
            <person name="Kitano H."/>
            <person name="Kollias G."/>
            <person name="Krishnan S.P."/>
            <person name="Kruger A."/>
            <person name="Kummerfeld S.K."/>
            <person name="Kurochkin I.V."/>
            <person name="Lareau L.F."/>
            <person name="Lazarevic D."/>
            <person name="Lipovich L."/>
            <person name="Liu J."/>
            <person name="Liuni S."/>
            <person name="McWilliam S."/>
            <person name="Madan Babu M."/>
            <person name="Madera M."/>
            <person name="Marchionni L."/>
            <person name="Matsuda H."/>
            <person name="Matsuzawa S."/>
            <person name="Miki H."/>
            <person name="Mignone F."/>
            <person name="Miyake S."/>
            <person name="Morris K."/>
            <person name="Mottagui-Tabar S."/>
            <person name="Mulder N."/>
            <person name="Nakano N."/>
            <person name="Nakauchi H."/>
            <person name="Ng P."/>
            <person name="Nilsson R."/>
            <person name="Nishiguchi S."/>
            <person name="Nishikawa S."/>
            <person name="Nori F."/>
            <person name="Ohara O."/>
            <person name="Okazaki Y."/>
            <person name="Orlando V."/>
            <person name="Pang K.C."/>
            <person name="Pavan W.J."/>
            <person name="Pavesi G."/>
            <person name="Pesole G."/>
            <person name="Petrovsky N."/>
            <person name="Piazza S."/>
            <person name="Reed J."/>
            <person name="Reid J.F."/>
            <person name="Ring B.Z."/>
            <person name="Ringwald M."/>
            <person name="Rost B."/>
            <person name="Ruan Y."/>
            <person name="Salzberg S.L."/>
            <person name="Sandelin A."/>
            <person name="Schneider C."/>
            <person name="Schoenbach C."/>
            <person name="Sekiguchi K."/>
            <person name="Semple C.A."/>
            <person name="Seno S."/>
            <person name="Sessa L."/>
            <person name="Sheng Y."/>
            <person name="Shibata Y."/>
            <person name="Shimada H."/>
            <person name="Shimada K."/>
            <person name="Silva D."/>
            <person name="Sinclair B."/>
            <person name="Sperling S."/>
            <person name="Stupka E."/>
            <person name="Sugiura K."/>
            <person name="Sultana R."/>
            <person name="Takenaka Y."/>
            <person name="Taki K."/>
            <person name="Tammoja K."/>
            <person name="Tan S.L."/>
            <person name="Tang S."/>
            <person name="Taylor M.S."/>
            <person name="Tegner J."/>
            <person name="Teichmann S.A."/>
            <person name="Ueda H.R."/>
            <person name="van Nimwegen E."/>
            <person name="Verardo R."/>
            <person name="Wei C.L."/>
            <person name="Yagi K."/>
            <person name="Yamanishi H."/>
            <person name="Zabarovsky E."/>
            <person name="Zhu S."/>
            <person name="Zimmer A."/>
            <person name="Hide W."/>
            <person name="Bult C."/>
            <person name="Grimmond S.M."/>
            <person name="Teasdale R.D."/>
            <person name="Liu E.T."/>
            <person name="Brusic V."/>
            <person name="Quackenbush J."/>
            <person name="Wahlestedt C."/>
            <person name="Mattick J.S."/>
            <person name="Hume D.A."/>
            <person name="Kai C."/>
            <person name="Sasaki D."/>
            <person name="Tomaru Y."/>
            <person name="Fukuda S."/>
            <person name="Kanamori-Katayama M."/>
            <person name="Suzuki M."/>
            <person name="Aoki J."/>
            <person name="Arakawa T."/>
            <person name="Iida J."/>
            <person name="Imamura K."/>
            <person name="Itoh M."/>
            <person name="Kato T."/>
            <person name="Kawaji H."/>
            <person name="Kawagashira N."/>
            <person name="Kawashima T."/>
            <person name="Kojima M."/>
            <person name="Kondo S."/>
            <person name="Konno H."/>
            <person name="Nakano K."/>
            <person name="Ninomiya N."/>
            <person name="Nishio T."/>
            <person name="Okada M."/>
            <person name="Plessy C."/>
            <person name="Shibata K."/>
            <person name="Shiraki T."/>
            <person name="Suzuki S."/>
            <person name="Tagami M."/>
            <person name="Waki K."/>
            <person name="Watahiki A."/>
            <person name="Okamura-Oho Y."/>
            <person name="Suzuki H."/>
            <person name="Kawai J."/>
            <person name="Hayashizaki Y."/>
        </authorList>
    </citation>
    <scope>NUCLEOTIDE SEQUENCE [LARGE SCALE MRNA]</scope>
    <source>
        <strain>C57BL/6J</strain>
        <tissue>Hypothalamus</tissue>
        <tissue>Medulla oblongata</tissue>
        <tissue>Pituitary</tissue>
    </source>
</reference>
<reference key="2">
    <citation type="journal article" date="2004" name="Genome Res.">
        <title>The status, quality, and expansion of the NIH full-length cDNA project: the Mammalian Gene Collection (MGC).</title>
        <authorList>
            <consortium name="The MGC Project Team"/>
        </authorList>
    </citation>
    <scope>NUCLEOTIDE SEQUENCE [LARGE SCALE MRNA]</scope>
    <source>
        <strain>C57BL/6J</strain>
        <tissue>Brain</tissue>
    </source>
</reference>
<reference key="3">
    <citation type="submission" date="1999-09" db="EMBL/GenBank/DDBJ databases">
        <authorList>
            <person name="Botcherby M.R.M."/>
            <person name="Straw R."/>
            <person name="Clarke D."/>
            <person name="Greystrong J.S."/>
            <person name="Weston P."/>
            <person name="Hunter G."/>
            <person name="Kimberly C."/>
            <person name="Rhodes M."/>
        </authorList>
    </citation>
    <scope>NUCLEOTIDE SEQUENCE [GENOMIC DNA] OF 200-527</scope>
    <source>
        <strain>129/SvJ</strain>
    </source>
</reference>
<reference key="4">
    <citation type="journal article" date="1999" name="Am. J. Hum. Genet.">
        <title>X-linked late-onset sensorineural deafness caused by a deletion involving OA1 and a novel gene containing WD-40 repeats.</title>
        <authorList>
            <person name="Bassi M.T."/>
            <person name="Ramesar R.S."/>
            <person name="Caciotti B."/>
            <person name="Winship I.M."/>
            <person name="De Grandi A."/>
            <person name="Riboni M."/>
            <person name="Townes P.L."/>
            <person name="Beighton P."/>
            <person name="Ballabio A."/>
            <person name="Borsani G."/>
        </authorList>
    </citation>
    <scope>TISSUE SPECIFICITY</scope>
</reference>
<reference key="5">
    <citation type="journal article" date="2010" name="Cell">
        <title>A tissue-specific atlas of mouse protein phosphorylation and expression.</title>
        <authorList>
            <person name="Huttlin E.L."/>
            <person name="Jedrychowski M.P."/>
            <person name="Elias J.E."/>
            <person name="Goswami T."/>
            <person name="Rad R."/>
            <person name="Beausoleil S.A."/>
            <person name="Villen J."/>
            <person name="Haas W."/>
            <person name="Sowa M.E."/>
            <person name="Gygi S.P."/>
        </authorList>
    </citation>
    <scope>IDENTIFICATION BY MASS SPECTROMETRY [LARGE SCALE ANALYSIS]</scope>
    <source>
        <tissue>Lung</tissue>
    </source>
</reference>
<reference key="6">
    <citation type="journal article" date="2015" name="J. Biol. Chem.">
        <title>Exchange factor TBL1 and arginine methyltransferase PRMT6 cooperate in protecting G protein pathway suppressor 2 (GPS2) from proteasomal degradation.</title>
        <authorList>
            <person name="Huang J."/>
            <person name="Cardamone M.D."/>
            <person name="Johnson H.E."/>
            <person name="Neault M."/>
            <person name="Chan M."/>
            <person name="Floyd Z.E."/>
            <person name="Mallette F.A."/>
            <person name="Perissi V."/>
        </authorList>
    </citation>
    <scope>INTERACTION WITH GPS2</scope>
</reference>
<reference key="7">
    <citation type="journal article" date="2017" name="Proc. Natl. Acad. Sci. U.S.A.">
        <title>Structure of the MeCP2-TBLR1 complex reveals a molecular basis for Rett syndrome and related disorders.</title>
        <authorList>
            <person name="Kruusvee V."/>
            <person name="Lyst M.J."/>
            <person name="Taylor C."/>
            <person name="Tarnauskaite Z."/>
            <person name="Bird A.P."/>
            <person name="Cook A.G."/>
        </authorList>
    </citation>
    <scope>MUTAGENESIS OF GLU-184; ASP-326; GLU-364; ASP-382; PRO-457 AND TYR-459</scope>
    <scope>SUBCELLULAR LOCATION</scope>
    <scope>INTERACTION WITH MECP2</scope>
</reference>
<comment type="function">
    <text evidence="2">F-box-like protein involved in the recruitment of the ubiquitin/19S proteasome complex to nuclear receptor-regulated transcription units. Plays an essential role in transcription activation mediated by nuclear receptors. Probably acts as integral component of corepressor complexes that mediates the recruitment of the 19S proteasome complex, leading to the subsequent proteasomal degradation of transcription repressor complexes, thereby allowing cofactor exchange (By similarity).</text>
</comment>
<comment type="subunit">
    <text evidence="2 8 9">Homotetramer; dimer of dimers (By similarity). Component of the N-Cor repressor complex, at least composed of NCOR1, NCOR2, HDAC3, TBL1X, TBL1R, CORO2A and GPS2. Component of a E3 ubiquitin ligase complex containing UBE2D1, SIAH1, CACYBP/SIP, SKP1, APC and TBL1X. Interacts with GPS2 (when sumoylated); leading to protect GPS2 against degradation by the proteasome (PubMed:26070566). Probably part of other corepressor complexes, that do not contain NCOR1 and NCOR2. Interacts with histones H2B, H3a and H4 (By similarity). Interacts with MECP2; recruits TBL1X to the heterochromatin foci (PubMed:28348241). Interacts with USP44 (By similarity).</text>
</comment>
<comment type="interaction">
    <interactant intactId="EBI-8821270">
        <id>Q9QXE7</id>
    </interactant>
    <interactant intactId="EBI-1189067">
        <id>P51608</id>
        <label>MECP2</label>
    </interactant>
    <organismsDiffer>true</organismsDiffer>
    <experiments>3</experiments>
</comment>
<comment type="subcellular location">
    <subcellularLocation>
        <location evidence="1">Nucleus</location>
    </subcellularLocation>
    <text evidence="9">Colocalized with MECP2 to the heterochromatin foci.</text>
</comment>
<comment type="tissue specificity">
    <text evidence="7">Expressed in the cochlea.</text>
</comment>
<comment type="domain">
    <text evidence="1">The F-box-like domain is related to the F-box domain, and apparently displays the same function as component of ubiquitin E3 ligase complexes.</text>
</comment>
<comment type="similarity">
    <text evidence="10">Belongs to the WD repeat EBI family.</text>
</comment>
<comment type="sequence caution" evidence="10">
    <conflict type="erroneous gene model prediction">
        <sequence resource="EMBL-CDS" id="CAB61534"/>
    </conflict>
</comment>
<evidence type="ECO:0000250" key="1"/>
<evidence type="ECO:0000250" key="2">
    <source>
        <dbReference type="UniProtKB" id="O60907"/>
    </source>
</evidence>
<evidence type="ECO:0000250" key="3">
    <source>
        <dbReference type="UniProtKB" id="Q8BHJ5"/>
    </source>
</evidence>
<evidence type="ECO:0000250" key="4">
    <source>
        <dbReference type="UniProtKB" id="Q9BZK7"/>
    </source>
</evidence>
<evidence type="ECO:0000255" key="5">
    <source>
        <dbReference type="PROSITE-ProRule" id="PRU00126"/>
    </source>
</evidence>
<evidence type="ECO:0000256" key="6">
    <source>
        <dbReference type="SAM" id="MobiDB-lite"/>
    </source>
</evidence>
<evidence type="ECO:0000269" key="7">
    <source>
    </source>
</evidence>
<evidence type="ECO:0000269" key="8">
    <source>
    </source>
</evidence>
<evidence type="ECO:0000269" key="9">
    <source>
    </source>
</evidence>
<evidence type="ECO:0000305" key="10"/>
<accession>Q9QXE7</accession>
<accession>Q8BMM0</accession>
<accession>Q8BYQ4</accession>
<accession>Q8C0A1</accession>
<dbReference type="EMBL" id="AK030547">
    <property type="protein sequence ID" value="BAC27015.1"/>
    <property type="molecule type" value="mRNA"/>
</dbReference>
<dbReference type="EMBL" id="AK031937">
    <property type="protein sequence ID" value="BAC27612.1"/>
    <property type="molecule type" value="mRNA"/>
</dbReference>
<dbReference type="EMBL" id="AK038674">
    <property type="protein sequence ID" value="BAC30092.1"/>
    <property type="molecule type" value="mRNA"/>
</dbReference>
<dbReference type="EMBL" id="BC043105">
    <property type="protein sequence ID" value="AAH43105.1"/>
    <property type="molecule type" value="mRNA"/>
</dbReference>
<dbReference type="EMBL" id="F38006">
    <property type="protein sequence ID" value="CAB61534.1"/>
    <property type="status" value="ALT_SEQ"/>
    <property type="molecule type" value="Genomic_DNA"/>
</dbReference>
<dbReference type="CCDS" id="CCDS41036.1"/>
<dbReference type="RefSeq" id="NP_001412942.1">
    <property type="nucleotide sequence ID" value="NM_001426013.1"/>
</dbReference>
<dbReference type="RefSeq" id="NP_001412943.1">
    <property type="nucleotide sequence ID" value="NM_001426014.1"/>
</dbReference>
<dbReference type="RefSeq" id="NP_001412944.1">
    <property type="nucleotide sequence ID" value="NM_001426015.1"/>
</dbReference>
<dbReference type="RefSeq" id="NP_001412945.1">
    <property type="nucleotide sequence ID" value="NM_001426016.1"/>
</dbReference>
<dbReference type="RefSeq" id="NP_001412946.1">
    <property type="nucleotide sequence ID" value="NM_001426017.1"/>
</dbReference>
<dbReference type="RefSeq" id="NP_065626.1">
    <property type="nucleotide sequence ID" value="NM_020601.3"/>
</dbReference>
<dbReference type="RefSeq" id="XP_006528002.1">
    <property type="nucleotide sequence ID" value="XM_006527939.2"/>
</dbReference>
<dbReference type="SMR" id="Q9QXE7"/>
<dbReference type="BioGRID" id="203977">
    <property type="interactions" value="13"/>
</dbReference>
<dbReference type="DIP" id="DIP-62055N"/>
<dbReference type="FunCoup" id="Q9QXE7">
    <property type="interactions" value="563"/>
</dbReference>
<dbReference type="IntAct" id="Q9QXE7">
    <property type="interactions" value="3"/>
</dbReference>
<dbReference type="MINT" id="Q9QXE7"/>
<dbReference type="STRING" id="10090.ENSMUSP00000085549"/>
<dbReference type="GlyGen" id="Q9QXE7">
    <property type="glycosylation" value="1 site, 1 O-linked glycan (1 site)"/>
</dbReference>
<dbReference type="iPTMnet" id="Q9QXE7"/>
<dbReference type="PhosphoSitePlus" id="Q9QXE7"/>
<dbReference type="SwissPalm" id="Q9QXE7"/>
<dbReference type="PaxDb" id="10090-ENSMUSP00000085549"/>
<dbReference type="PeptideAtlas" id="Q9QXE7"/>
<dbReference type="ProteomicsDB" id="262952"/>
<dbReference type="Pumba" id="Q9QXE7"/>
<dbReference type="DNASU" id="21372"/>
<dbReference type="Ensembl" id="ENSMUST00000088217.12">
    <property type="protein sequence ID" value="ENSMUSP00000085549.6"/>
    <property type="gene ID" value="ENSMUSG00000025246.14"/>
</dbReference>
<dbReference type="GeneID" id="21372"/>
<dbReference type="KEGG" id="mmu:21372"/>
<dbReference type="UCSC" id="uc009tqo.1">
    <property type="organism name" value="mouse"/>
</dbReference>
<dbReference type="AGR" id="MGI:1336172"/>
<dbReference type="CTD" id="6907"/>
<dbReference type="MGI" id="MGI:1336172">
    <property type="gene designation" value="Tbl1x"/>
</dbReference>
<dbReference type="VEuPathDB" id="HostDB:ENSMUSG00000025246"/>
<dbReference type="eggNOG" id="KOG0273">
    <property type="taxonomic scope" value="Eukaryota"/>
</dbReference>
<dbReference type="GeneTree" id="ENSGT00940000153421"/>
<dbReference type="HOGENOM" id="CLU_007609_2_0_1"/>
<dbReference type="InParanoid" id="Q9QXE7"/>
<dbReference type="OMA" id="KWNKCGN"/>
<dbReference type="OrthoDB" id="1367865at2759"/>
<dbReference type="PhylomeDB" id="Q9QXE7"/>
<dbReference type="TreeFam" id="TF323190"/>
<dbReference type="Reactome" id="R-MMU-3214815">
    <property type="pathway name" value="HDACs deacetylate histones"/>
</dbReference>
<dbReference type="Reactome" id="R-MMU-350054">
    <property type="pathway name" value="Notch-HLH transcription pathway"/>
</dbReference>
<dbReference type="Reactome" id="R-MMU-400206">
    <property type="pathway name" value="Regulation of lipid metabolism by PPARalpha"/>
</dbReference>
<dbReference type="Reactome" id="R-MMU-9029569">
    <property type="pathway name" value="NR1H3 &amp; NR1H2 regulate gene expression linked to cholesterol transport and efflux"/>
</dbReference>
<dbReference type="Reactome" id="R-MMU-9707564">
    <property type="pathway name" value="Cytoprotection by HMOX1"/>
</dbReference>
<dbReference type="Reactome" id="R-MMU-9841922">
    <property type="pathway name" value="MLL4 and MLL3 complexes regulate expression of PPARG target genes in adipogenesis and hepatic steatosis"/>
</dbReference>
<dbReference type="BioGRID-ORCS" id="21372">
    <property type="hits" value="9 hits in 82 CRISPR screens"/>
</dbReference>
<dbReference type="ChiTaRS" id="Tbl1x">
    <property type="organism name" value="mouse"/>
</dbReference>
<dbReference type="PRO" id="PR:Q9QXE7"/>
<dbReference type="Proteomes" id="UP000000589">
    <property type="component" value="Chromosome X"/>
</dbReference>
<dbReference type="RNAct" id="Q9QXE7">
    <property type="molecule type" value="protein"/>
</dbReference>
<dbReference type="Bgee" id="ENSMUSG00000025246">
    <property type="expression patterns" value="Expressed in embryonic post-anal tail and 240 other cell types or tissues"/>
</dbReference>
<dbReference type="GO" id="GO:0005654">
    <property type="term" value="C:nucleoplasm"/>
    <property type="evidence" value="ECO:0000304"/>
    <property type="project" value="Reactome"/>
</dbReference>
<dbReference type="GO" id="GO:0005667">
    <property type="term" value="C:transcription regulator complex"/>
    <property type="evidence" value="ECO:0000314"/>
    <property type="project" value="MGI"/>
</dbReference>
<dbReference type="GO" id="GO:0003682">
    <property type="term" value="F:chromatin binding"/>
    <property type="evidence" value="ECO:0000314"/>
    <property type="project" value="MGI"/>
</dbReference>
<dbReference type="GO" id="GO:0003677">
    <property type="term" value="F:DNA binding"/>
    <property type="evidence" value="ECO:0000314"/>
    <property type="project" value="MGI"/>
</dbReference>
<dbReference type="GO" id="GO:0000976">
    <property type="term" value="F:transcription cis-regulatory region binding"/>
    <property type="evidence" value="ECO:0000314"/>
    <property type="project" value="BHF-UCL"/>
</dbReference>
<dbReference type="GO" id="GO:0003714">
    <property type="term" value="F:transcription corepressor activity"/>
    <property type="evidence" value="ECO:0000315"/>
    <property type="project" value="MGI"/>
</dbReference>
<dbReference type="GO" id="GO:0045444">
    <property type="term" value="P:fat cell differentiation"/>
    <property type="evidence" value="ECO:0000315"/>
    <property type="project" value="MGI"/>
</dbReference>
<dbReference type="GO" id="GO:0045892">
    <property type="term" value="P:negative regulation of DNA-templated transcription"/>
    <property type="evidence" value="ECO:0000315"/>
    <property type="project" value="MGI"/>
</dbReference>
<dbReference type="GO" id="GO:0045944">
    <property type="term" value="P:positive regulation of transcription by RNA polymerase II"/>
    <property type="evidence" value="ECO:0000315"/>
    <property type="project" value="BHF-UCL"/>
</dbReference>
<dbReference type="GO" id="GO:0043161">
    <property type="term" value="P:proteasome-mediated ubiquitin-dependent protein catabolic process"/>
    <property type="evidence" value="ECO:0000315"/>
    <property type="project" value="MGI"/>
</dbReference>
<dbReference type="GO" id="GO:0050821">
    <property type="term" value="P:protein stabilization"/>
    <property type="evidence" value="ECO:0000314"/>
    <property type="project" value="UniProtKB"/>
</dbReference>
<dbReference type="GO" id="GO:0006357">
    <property type="term" value="P:regulation of transcription by RNA polymerase II"/>
    <property type="evidence" value="ECO:0000316"/>
    <property type="project" value="MGI"/>
</dbReference>
<dbReference type="GO" id="GO:0043627">
    <property type="term" value="P:response to estrogen"/>
    <property type="evidence" value="ECO:0000315"/>
    <property type="project" value="MGI"/>
</dbReference>
<dbReference type="GO" id="GO:0048545">
    <property type="term" value="P:response to steroid hormone"/>
    <property type="evidence" value="ECO:0000315"/>
    <property type="project" value="MGI"/>
</dbReference>
<dbReference type="CDD" id="cd00200">
    <property type="entry name" value="WD40"/>
    <property type="match status" value="1"/>
</dbReference>
<dbReference type="FunFam" id="1.20.960.30:FF:000001">
    <property type="entry name" value="F-box-like/WD repeat-containing protein TBL1XR1"/>
    <property type="match status" value="1"/>
</dbReference>
<dbReference type="FunFam" id="2.130.10.10:FF:000014">
    <property type="entry name" value="Putative F-box-like/WD repeat-containing protein TBL1XR1"/>
    <property type="match status" value="1"/>
</dbReference>
<dbReference type="Gene3D" id="1.20.960.30">
    <property type="match status" value="1"/>
</dbReference>
<dbReference type="Gene3D" id="2.130.10.10">
    <property type="entry name" value="YVTN repeat-like/Quinoprotein amine dehydrogenase"/>
    <property type="match status" value="1"/>
</dbReference>
<dbReference type="InterPro" id="IPR045183">
    <property type="entry name" value="Ebi-like"/>
</dbReference>
<dbReference type="InterPro" id="IPR020472">
    <property type="entry name" value="G-protein_beta_WD-40_rep"/>
</dbReference>
<dbReference type="InterPro" id="IPR006594">
    <property type="entry name" value="LisH"/>
</dbReference>
<dbReference type="InterPro" id="IPR015943">
    <property type="entry name" value="WD40/YVTN_repeat-like_dom_sf"/>
</dbReference>
<dbReference type="InterPro" id="IPR019775">
    <property type="entry name" value="WD40_repeat_CS"/>
</dbReference>
<dbReference type="InterPro" id="IPR036322">
    <property type="entry name" value="WD40_repeat_dom_sf"/>
</dbReference>
<dbReference type="InterPro" id="IPR001680">
    <property type="entry name" value="WD40_rpt"/>
</dbReference>
<dbReference type="PANTHER" id="PTHR22846:SF52">
    <property type="entry name" value="F-BOX-LIKE_WD REPEAT-CONTAINING PROTEIN TBL1X"/>
    <property type="match status" value="1"/>
</dbReference>
<dbReference type="PANTHER" id="PTHR22846">
    <property type="entry name" value="WD40 REPEAT PROTEIN"/>
    <property type="match status" value="1"/>
</dbReference>
<dbReference type="Pfam" id="PF08513">
    <property type="entry name" value="LisH"/>
    <property type="match status" value="1"/>
</dbReference>
<dbReference type="Pfam" id="PF00400">
    <property type="entry name" value="WD40"/>
    <property type="match status" value="6"/>
</dbReference>
<dbReference type="PRINTS" id="PR00320">
    <property type="entry name" value="GPROTEINBRPT"/>
</dbReference>
<dbReference type="SMART" id="SM00667">
    <property type="entry name" value="LisH"/>
    <property type="match status" value="1"/>
</dbReference>
<dbReference type="SMART" id="SM00320">
    <property type="entry name" value="WD40"/>
    <property type="match status" value="8"/>
</dbReference>
<dbReference type="SUPFAM" id="SSF50978">
    <property type="entry name" value="WD40 repeat-like"/>
    <property type="match status" value="1"/>
</dbReference>
<dbReference type="PROSITE" id="PS50896">
    <property type="entry name" value="LISH"/>
    <property type="match status" value="1"/>
</dbReference>
<dbReference type="PROSITE" id="PS00678">
    <property type="entry name" value="WD_REPEATS_1"/>
    <property type="match status" value="4"/>
</dbReference>
<dbReference type="PROSITE" id="PS50082">
    <property type="entry name" value="WD_REPEATS_2"/>
    <property type="match status" value="6"/>
</dbReference>
<dbReference type="PROSITE" id="PS50294">
    <property type="entry name" value="WD_REPEATS_REGION"/>
    <property type="match status" value="1"/>
</dbReference>
<sequence length="527" mass="56802">MSITSDEVNFLVYRYLQESGFSHSAFTFGIESHISQSNINGTLVPPAALISILQKGLQYVEAEISINEDGTVFDGRPIESLSLIDAVMPDVVQTRQQAFREKLAQQQANAAAAAAAAAATATSTAATTPAAAAQQNPPKNGEATVNGEENGAHAINNHSKPMEIDGDVEIPPSKATVLRGHESEVFICAWNPVSDLLASGSGDSTARIWNLNENSNGGSTQLVLRHCIREGGHDVPSNKDVTSLDWNSDGTLLATGSYDGFARIWTEDGNLASTLGQHKGPIFALKWNKKGNYILSAGVDKTTIIWDAHTGEAKQQFPFHSAPALDVDWQNNTTFASCSTDMCIHVCRLGCDRPVKTFQGHTNEVNAIKWDPSGMLLASCSDDMTLKIWSMKQDACVHDLQAHSKEIYTIKWSPTGPATSNPNSNIMLASASFDSTVRLWDVERGVCIHTLTKHQEPVYSVAFSPDGKYLASGSFDKCVHIWNTQSGSLVHSYRGTGGIFEVCWNARGDKVGASASDGSVCVLDLRK</sequence>
<feature type="initiator methionine" description="Removed" evidence="4">
    <location>
        <position position="1"/>
    </location>
</feature>
<feature type="chain" id="PRO_0000051265" description="F-box-like/WD repeat-containing protein TBL1X">
    <location>
        <begin position="2"/>
        <end position="527"/>
    </location>
</feature>
<feature type="domain" description="LisH" evidence="5">
    <location>
        <begin position="4"/>
        <end position="36"/>
    </location>
</feature>
<feature type="domain" description="F-box-like">
    <location>
        <begin position="41"/>
        <end position="86"/>
    </location>
</feature>
<feature type="repeat" description="WD 1">
    <location>
        <begin position="180"/>
        <end position="219"/>
    </location>
</feature>
<feature type="repeat" description="WD 2">
    <location>
        <begin position="236"/>
        <end position="275"/>
    </location>
</feature>
<feature type="repeat" description="WD 3">
    <location>
        <begin position="277"/>
        <end position="316"/>
    </location>
</feature>
<feature type="repeat" description="WD 4">
    <location>
        <begin position="319"/>
        <end position="359"/>
    </location>
</feature>
<feature type="repeat" description="WD 5">
    <location>
        <begin position="360"/>
        <end position="399"/>
    </location>
</feature>
<feature type="repeat" description="WD 6">
    <location>
        <begin position="402"/>
        <end position="450"/>
    </location>
</feature>
<feature type="repeat" description="WD 7">
    <location>
        <begin position="453"/>
        <end position="492"/>
    </location>
</feature>
<feature type="repeat" description="WD 8">
    <location>
        <begin position="494"/>
        <end position="526"/>
    </location>
</feature>
<feature type="region of interest" description="Disordered" evidence="6">
    <location>
        <begin position="127"/>
        <end position="164"/>
    </location>
</feature>
<feature type="modified residue" description="N-acetylserine" evidence="4">
    <location>
        <position position="2"/>
    </location>
</feature>
<feature type="modified residue" description="N6-acetyllysine" evidence="3">
    <location>
        <position position="102"/>
    </location>
</feature>
<feature type="cross-link" description="Glycyl lysine isopeptide (Lys-Gly) (interchain with G-Cter in SUMO2)" evidence="4">
    <location>
        <position position="290"/>
    </location>
</feature>
<feature type="mutagenesis site" description="Affects recruitment to heterochromatin by MECP2." evidence="9">
    <original>E</original>
    <variation>A</variation>
    <location>
        <position position="184"/>
    </location>
</feature>
<feature type="mutagenesis site" description="Affects recruitment to heterochromatin by MECP2." evidence="9">
    <original>D</original>
    <variation>N</variation>
    <location>
        <position position="326"/>
    </location>
</feature>
<feature type="mutagenesis site" description="Affects recruitment to heterochromatin by MECP2." evidence="9">
    <original>E</original>
    <variation>A</variation>
    <location>
        <position position="364"/>
    </location>
</feature>
<feature type="mutagenesis site" description="Affects recruitment to heterochromatin by MECP2. Does not interact with MECP2. Is efficiently incorporated in N-Cor repressor complex." evidence="9">
    <original>D</original>
    <variation>A</variation>
    <location>
        <position position="382"/>
    </location>
</feature>
<feature type="mutagenesis site" description="Does not interact with MECP2. Affects recruitment to heterochromatin by MECP2. Is efficiently incorporated in N-Cor repressor complex." evidence="9">
    <original>P</original>
    <variation>R</variation>
    <location>
        <position position="457"/>
    </location>
</feature>
<feature type="mutagenesis site" description="Does not affect recruitment to heterochromatin by MECP2." evidence="9">
    <original>Y</original>
    <variation>F</variation>
    <location>
        <position position="459"/>
    </location>
</feature>
<feature type="sequence conflict" description="In Ref. 1; BAC27015." evidence="10" ref="1">
    <original>A</original>
    <variation>T</variation>
    <location>
        <position position="104"/>
    </location>
</feature>
<feature type="sequence conflict" description="In Ref. 1; BAC27612." evidence="10" ref="1">
    <original>L</original>
    <variation>H</variation>
    <location>
        <position position="349"/>
    </location>
</feature>
<protein>
    <recommendedName>
        <fullName>F-box-like/WD repeat-containing protein TBL1X</fullName>
    </recommendedName>
    <alternativeName>
        <fullName>Transducin beta-like protein 1X</fullName>
    </alternativeName>
</protein>
<gene>
    <name type="primary">Tbl1x</name>
    <name type="synonym">Tbl1</name>
</gene>
<organism>
    <name type="scientific">Mus musculus</name>
    <name type="common">Mouse</name>
    <dbReference type="NCBI Taxonomy" id="10090"/>
    <lineage>
        <taxon>Eukaryota</taxon>
        <taxon>Metazoa</taxon>
        <taxon>Chordata</taxon>
        <taxon>Craniata</taxon>
        <taxon>Vertebrata</taxon>
        <taxon>Euteleostomi</taxon>
        <taxon>Mammalia</taxon>
        <taxon>Eutheria</taxon>
        <taxon>Euarchontoglires</taxon>
        <taxon>Glires</taxon>
        <taxon>Rodentia</taxon>
        <taxon>Myomorpha</taxon>
        <taxon>Muroidea</taxon>
        <taxon>Muridae</taxon>
        <taxon>Murinae</taxon>
        <taxon>Mus</taxon>
        <taxon>Mus</taxon>
    </lineage>
</organism>
<keyword id="KW-0007">Acetylation</keyword>
<keyword id="KW-0010">Activator</keyword>
<keyword id="KW-1017">Isopeptide bond</keyword>
<keyword id="KW-0539">Nucleus</keyword>
<keyword id="KW-1185">Reference proteome</keyword>
<keyword id="KW-0677">Repeat</keyword>
<keyword id="KW-0804">Transcription</keyword>
<keyword id="KW-0805">Transcription regulation</keyword>
<keyword id="KW-0832">Ubl conjugation</keyword>
<keyword id="KW-0833">Ubl conjugation pathway</keyword>
<keyword id="KW-0853">WD repeat</keyword>
<proteinExistence type="evidence at protein level"/>
<name>TBL1X_MOUSE</name>